<protein>
    <recommendedName>
        <fullName>Protein UL20 homolog</fullName>
    </recommendedName>
</protein>
<organismHost>
    <name type="scientific">Equus caballus</name>
    <name type="common">Horse</name>
    <dbReference type="NCBI Taxonomy" id="9796"/>
</organismHost>
<comment type="function">
    <text evidence="1">Plays an essential role in egress of virus particles from the nucleus, cytoplasmic envelopment and virus-induced cell fusion. Forms a functional protein complex with gK and this interaction is absolutely essential for their coordinate intracellular transport, gK glycosylation, expression on host cell surface, and function. Together, they modulate gB-mediated virus-induced cell fusion and virion egress and therefore actively participate in these processes (By similarity).</text>
</comment>
<comment type="subunit">
    <text evidence="1">Interacts with gK (via N-terminus); this interaction plays a role in the coordinate transport of UL20 and gK to the trans-Golgi network (TGN), and is required for their cell surface expression. Interacts with gB (By similarity).</text>
</comment>
<comment type="subcellular location">
    <subcellularLocation>
        <location evidence="1">Virion</location>
    </subcellularLocation>
    <subcellularLocation>
        <location evidence="1">Host cell membrane</location>
        <topology evidence="1">Multi-pass membrane protein</topology>
    </subcellularLocation>
    <subcellularLocation>
        <location evidence="1">Host endosome membrane</location>
        <topology evidence="1">Multi-pass membrane protein</topology>
    </subcellularLocation>
    <subcellularLocation>
        <location evidence="1">Host Golgi apparatus membrane</location>
        <topology evidence="1">Multi-pass membrane protein</topology>
    </subcellularLocation>
    <subcellularLocation>
        <location evidence="1">Host nucleus membrane</location>
        <topology evidence="1">Multi-pass membrane protein</topology>
    </subcellularLocation>
    <text evidence="1">During virion morphogenesis, this protein probably accumulates in the endosomes and trans-Golgi where secondary envelopment occurs. It is probably transported with gK to the cell surface from where it is endocytosed and directed to the trans-Golgi network (TGN) (By similarity).</text>
</comment>
<comment type="similarity">
    <text evidence="3">Belongs to the alphaherpesvirinae UL20 family.</text>
</comment>
<dbReference type="EMBL" id="AY464052">
    <property type="protein sequence ID" value="AAS45926.1"/>
    <property type="molecule type" value="Genomic_DNA"/>
</dbReference>
<dbReference type="KEGG" id="vg:1487525"/>
<dbReference type="Proteomes" id="UP000008296">
    <property type="component" value="Segment"/>
</dbReference>
<dbReference type="GO" id="GO:0044175">
    <property type="term" value="C:host cell endosome membrane"/>
    <property type="evidence" value="ECO:0007669"/>
    <property type="project" value="UniProtKB-SubCell"/>
</dbReference>
<dbReference type="GO" id="GO:0044178">
    <property type="term" value="C:host cell Golgi membrane"/>
    <property type="evidence" value="ECO:0007669"/>
    <property type="project" value="UniProtKB-SubCell"/>
</dbReference>
<dbReference type="GO" id="GO:0044200">
    <property type="term" value="C:host cell nuclear membrane"/>
    <property type="evidence" value="ECO:0007669"/>
    <property type="project" value="UniProtKB-SubCell"/>
</dbReference>
<dbReference type="GO" id="GO:0020002">
    <property type="term" value="C:host cell plasma membrane"/>
    <property type="evidence" value="ECO:0007669"/>
    <property type="project" value="UniProtKB-SubCell"/>
</dbReference>
<dbReference type="GO" id="GO:0016020">
    <property type="term" value="C:membrane"/>
    <property type="evidence" value="ECO:0007669"/>
    <property type="project" value="UniProtKB-KW"/>
</dbReference>
<dbReference type="GO" id="GO:0044423">
    <property type="term" value="C:virion component"/>
    <property type="evidence" value="ECO:0007669"/>
    <property type="project" value="UniProtKB-KW"/>
</dbReference>
<dbReference type="GO" id="GO:0019058">
    <property type="term" value="P:viral life cycle"/>
    <property type="evidence" value="ECO:0007669"/>
    <property type="project" value="InterPro"/>
</dbReference>
<dbReference type="InterPro" id="IPR007629">
    <property type="entry name" value="Herpes_UL20"/>
</dbReference>
<dbReference type="Pfam" id="PF04544">
    <property type="entry name" value="Herpes_UL20"/>
    <property type="match status" value="1"/>
</dbReference>
<organism>
    <name type="scientific">Equine herpesvirus 1 (strain V592)</name>
    <name type="common">EHV-1</name>
    <name type="synonym">Equine abortion virus</name>
    <dbReference type="NCBI Taxonomy" id="310273"/>
    <lineage>
        <taxon>Viruses</taxon>
        <taxon>Duplodnaviria</taxon>
        <taxon>Heunggongvirae</taxon>
        <taxon>Peploviricota</taxon>
        <taxon>Herviviricetes</taxon>
        <taxon>Herpesvirales</taxon>
        <taxon>Orthoherpesviridae</taxon>
        <taxon>Alphaherpesvirinae</taxon>
        <taxon>Varicellovirus</taxon>
        <taxon>Varicellovirus equidalpha1</taxon>
        <taxon>Equid alphaherpesvirus 1</taxon>
    </lineage>
</organism>
<reference evidence="3 4" key="1">
    <citation type="submission" date="2003-11" db="EMBL/GenBank/DDBJ databases">
        <authorList>
            <person name="Davis-Poynter N."/>
            <person name="Nugent J."/>
            <person name="Birch-Machin I."/>
            <person name="Allen G.P."/>
        </authorList>
    </citation>
    <scope>NUCLEOTIDE SEQUENCE [LARGE SCALE GENOMIC DNA]</scope>
</reference>
<feature type="chain" id="PRO_0000115968" description="Protein UL20 homolog">
    <location>
        <begin position="1"/>
        <end position="239"/>
    </location>
</feature>
<feature type="transmembrane region" description="Helical" evidence="2">
    <location>
        <begin position="73"/>
        <end position="95"/>
    </location>
</feature>
<feature type="transmembrane region" description="Helical" evidence="2">
    <location>
        <begin position="102"/>
        <end position="124"/>
    </location>
</feature>
<feature type="transmembrane region" description="Helical" evidence="2">
    <location>
        <begin position="139"/>
        <end position="161"/>
    </location>
</feature>
<feature type="transmembrane region" description="Helical" evidence="2">
    <location>
        <begin position="198"/>
        <end position="220"/>
    </location>
</feature>
<evidence type="ECO:0000250" key="1"/>
<evidence type="ECO:0000255" key="2"/>
<evidence type="ECO:0000305" key="3"/>
<evidence type="ECO:0000312" key="4">
    <source>
        <dbReference type="EMBL" id="AAS45926.1"/>
    </source>
</evidence>
<accession>P84392</accession>
<accession>Q6S6T0</accession>
<keyword id="KW-1032">Host cell membrane</keyword>
<keyword id="KW-1039">Host endosome</keyword>
<keyword id="KW-1040">Host Golgi apparatus</keyword>
<keyword id="KW-1043">Host membrane</keyword>
<keyword id="KW-1048">Host nucleus</keyword>
<keyword id="KW-0472">Membrane</keyword>
<keyword id="KW-0812">Transmembrane</keyword>
<keyword id="KW-1133">Transmembrane helix</keyword>
<keyword id="KW-0946">Virion</keyword>
<sequence length="239" mass="26535">MPQVLMGNTRLHAPLEDGIPLIENDENSSQNEVDLYDYVSMSSYGGDNDFLISSAGGNITPENRPSFSAHVVLFAISALVIKPVCCFIFLNHYVITGSYDFAVAGGVCTVLYYMRLALTAWFMFRNIQSDMLPLNVWQQFVIGCMALGRTVAFMVVSYTTLFIRSELFFSMLAPNAGREYITPIIAHKLMPLISVRSAVCLVIISTAVYAADAICDTIGFTLPRMWMCILMRSSSVKRS</sequence>
<gene>
    <name type="ordered locus">41</name>
</gene>
<name>UL20_EHV1V</name>
<proteinExistence type="inferred from homology"/>